<evidence type="ECO:0000255" key="1">
    <source>
        <dbReference type="HAMAP-Rule" id="MF_01440"/>
    </source>
</evidence>
<protein>
    <recommendedName>
        <fullName evidence="1">Probable chemoreceptor glutamine deamidase CheD</fullName>
        <ecNumber evidence="1">3.5.1.44</ecNumber>
    </recommendedName>
</protein>
<sequence length="161" mass="17410">MSEQDGSPIRKYFLFPGATHVDAEECEITTVLGSCVAVCLWDQRHGGGGMNHFMLPLWNGEGLATPKYGSIAMERLLEQVLAIGARKEHLVAKVFGGANLLSTSSAACPIGERNIELAMTQLEEWRIAVVATDLGGRVGRKIIMNTMTGVVLLGRGKQQNQ</sequence>
<gene>
    <name evidence="1" type="primary">cheD</name>
    <name type="ordered locus">Glov_1310</name>
</gene>
<feature type="chain" id="PRO_1000184926" description="Probable chemoreceptor glutamine deamidase CheD">
    <location>
        <begin position="1"/>
        <end position="161"/>
    </location>
</feature>
<comment type="function">
    <text evidence="1">Probably deamidates glutamine residues to glutamate on methyl-accepting chemotaxis receptors (MCPs), playing an important role in chemotaxis.</text>
</comment>
<comment type="catalytic activity">
    <reaction evidence="1">
        <text>L-glutaminyl-[protein] + H2O = L-glutamyl-[protein] + NH4(+)</text>
        <dbReference type="Rhea" id="RHEA:16441"/>
        <dbReference type="Rhea" id="RHEA-COMP:10207"/>
        <dbReference type="Rhea" id="RHEA-COMP:10208"/>
        <dbReference type="ChEBI" id="CHEBI:15377"/>
        <dbReference type="ChEBI" id="CHEBI:28938"/>
        <dbReference type="ChEBI" id="CHEBI:29973"/>
        <dbReference type="ChEBI" id="CHEBI:30011"/>
        <dbReference type="EC" id="3.5.1.44"/>
    </reaction>
</comment>
<comment type="similarity">
    <text evidence="1">Belongs to the CheD family.</text>
</comment>
<dbReference type="EC" id="3.5.1.44" evidence="1"/>
<dbReference type="EMBL" id="CP001089">
    <property type="protein sequence ID" value="ACD95031.1"/>
    <property type="molecule type" value="Genomic_DNA"/>
</dbReference>
<dbReference type="RefSeq" id="WP_012469377.1">
    <property type="nucleotide sequence ID" value="NC_010814.1"/>
</dbReference>
<dbReference type="SMR" id="B3E7P9"/>
<dbReference type="STRING" id="398767.Glov_1310"/>
<dbReference type="KEGG" id="glo:Glov_1310"/>
<dbReference type="eggNOG" id="COG1871">
    <property type="taxonomic scope" value="Bacteria"/>
</dbReference>
<dbReference type="HOGENOM" id="CLU_087854_1_2_7"/>
<dbReference type="OrthoDB" id="9807202at2"/>
<dbReference type="Proteomes" id="UP000002420">
    <property type="component" value="Chromosome"/>
</dbReference>
<dbReference type="GO" id="GO:0050568">
    <property type="term" value="F:protein-glutamine glutaminase activity"/>
    <property type="evidence" value="ECO:0007669"/>
    <property type="project" value="UniProtKB-UniRule"/>
</dbReference>
<dbReference type="GO" id="GO:0006935">
    <property type="term" value="P:chemotaxis"/>
    <property type="evidence" value="ECO:0007669"/>
    <property type="project" value="UniProtKB-UniRule"/>
</dbReference>
<dbReference type="CDD" id="cd16352">
    <property type="entry name" value="CheD"/>
    <property type="match status" value="1"/>
</dbReference>
<dbReference type="Gene3D" id="3.30.1330.200">
    <property type="match status" value="1"/>
</dbReference>
<dbReference type="HAMAP" id="MF_01440">
    <property type="entry name" value="CheD"/>
    <property type="match status" value="1"/>
</dbReference>
<dbReference type="InterPro" id="IPR038592">
    <property type="entry name" value="CheD-like_sf"/>
</dbReference>
<dbReference type="InterPro" id="IPR005659">
    <property type="entry name" value="Chemorcpt_Glu_NH3ase_CheD"/>
</dbReference>
<dbReference type="InterPro" id="IPR011324">
    <property type="entry name" value="Cytotoxic_necrot_fac-like_cat"/>
</dbReference>
<dbReference type="PANTHER" id="PTHR35147">
    <property type="entry name" value="CHEMORECEPTOR GLUTAMINE DEAMIDASE CHED-RELATED"/>
    <property type="match status" value="1"/>
</dbReference>
<dbReference type="PANTHER" id="PTHR35147:SF2">
    <property type="entry name" value="CHEMORECEPTOR GLUTAMINE DEAMIDASE CHED-RELATED"/>
    <property type="match status" value="1"/>
</dbReference>
<dbReference type="Pfam" id="PF03975">
    <property type="entry name" value="CheD"/>
    <property type="match status" value="1"/>
</dbReference>
<dbReference type="SUPFAM" id="SSF64438">
    <property type="entry name" value="CNF1/YfiH-like putative cysteine hydrolases"/>
    <property type="match status" value="1"/>
</dbReference>
<name>CHED_TRIL1</name>
<keyword id="KW-0145">Chemotaxis</keyword>
<keyword id="KW-0378">Hydrolase</keyword>
<keyword id="KW-1185">Reference proteome</keyword>
<organism>
    <name type="scientific">Trichlorobacter lovleyi (strain ATCC BAA-1151 / DSM 17278 / SZ)</name>
    <name type="common">Geobacter lovleyi</name>
    <dbReference type="NCBI Taxonomy" id="398767"/>
    <lineage>
        <taxon>Bacteria</taxon>
        <taxon>Pseudomonadati</taxon>
        <taxon>Thermodesulfobacteriota</taxon>
        <taxon>Desulfuromonadia</taxon>
        <taxon>Geobacterales</taxon>
        <taxon>Geobacteraceae</taxon>
        <taxon>Trichlorobacter</taxon>
    </lineage>
</organism>
<reference key="1">
    <citation type="submission" date="2008-05" db="EMBL/GenBank/DDBJ databases">
        <title>Complete sequence of chromosome of Geobacter lovleyi SZ.</title>
        <authorList>
            <consortium name="US DOE Joint Genome Institute"/>
            <person name="Lucas S."/>
            <person name="Copeland A."/>
            <person name="Lapidus A."/>
            <person name="Glavina del Rio T."/>
            <person name="Dalin E."/>
            <person name="Tice H."/>
            <person name="Bruce D."/>
            <person name="Goodwin L."/>
            <person name="Pitluck S."/>
            <person name="Chertkov O."/>
            <person name="Meincke L."/>
            <person name="Brettin T."/>
            <person name="Detter J.C."/>
            <person name="Han C."/>
            <person name="Tapia R."/>
            <person name="Kuske C.R."/>
            <person name="Schmutz J."/>
            <person name="Larimer F."/>
            <person name="Land M."/>
            <person name="Hauser L."/>
            <person name="Kyrpides N."/>
            <person name="Mikhailova N."/>
            <person name="Sung Y."/>
            <person name="Fletcher K.E."/>
            <person name="Ritalahti K.M."/>
            <person name="Loeffler F.E."/>
            <person name="Richardson P."/>
        </authorList>
    </citation>
    <scope>NUCLEOTIDE SEQUENCE [LARGE SCALE GENOMIC DNA]</scope>
    <source>
        <strain>ATCC BAA-1151 / DSM 17278 / SZ</strain>
    </source>
</reference>
<proteinExistence type="inferred from homology"/>
<accession>B3E7P9</accession>